<sequence length="152" mass="17102">MPAHSLVMSSPALPAFLLCSTLLVIKMYVVAIITGQVRLRKKAFANPEDALRHGGPQYCRSDPDVERCLRAHRNDMETIYPFLFLGFVYSFLGPNPFVAWMHFLVFLVGRVAHTVAYLGKLRAPIRSVTYTLAQLPCASMALQILWEAARHL</sequence>
<accession>O14684</accession>
<accession>O14900</accession>
<accession>Q5SZC0</accession>
<gene>
    <name type="primary">PTGES</name>
    <name evidence="14" type="synonym">MGST1L1</name>
    <name type="synonym">MPGES1</name>
    <name type="synonym">PGES</name>
    <name evidence="17" type="synonym">PIG12</name>
</gene>
<organism>
    <name type="scientific">Homo sapiens</name>
    <name type="common">Human</name>
    <dbReference type="NCBI Taxonomy" id="9606"/>
    <lineage>
        <taxon>Eukaryota</taxon>
        <taxon>Metazoa</taxon>
        <taxon>Chordata</taxon>
        <taxon>Craniata</taxon>
        <taxon>Vertebrata</taxon>
        <taxon>Euteleostomi</taxon>
        <taxon>Mammalia</taxon>
        <taxon>Eutheria</taxon>
        <taxon>Euarchontoglires</taxon>
        <taxon>Primates</taxon>
        <taxon>Haplorrhini</taxon>
        <taxon>Catarrhini</taxon>
        <taxon>Hominidae</taxon>
        <taxon>Homo</taxon>
    </lineage>
</organism>
<name>PTGES_HUMAN</name>
<comment type="function">
    <text evidence="1 2 4 5 6 7 9">Terminal enzyme of the cyclooxygenase (COX)-2-mediated prostaglandin E2 (PGE2) biosynthetic pathway. Catalyzes the glutathione-dependent oxidoreduction of prostaglandin endoperoxide H2 (PGH2) to prostaglandin E2 (PGE2) in response to inflammatory stimuli (PubMed:10377395, PubMed:10869354, PubMed:12244105, PubMed:12460774, PubMed:12672824, PubMed:18682561). Plays a key role in inflammation response, fever and pain (By similarity). Also catalyzes the oxidoreduction of endocannabinoids into prostaglandin glycerol esters and PGG2 into 15-hydroperoxy-PGE2 (PubMed:12244105, PubMed:12672824). In addition, displays low glutathione transferase and glutathione-dependent peroxidase activities, toward 1-chloro-2,4-dinitrobenzene and 5-hydroperoxyicosatetraenoic acid (5-HPETE), respectively (PubMed:12672824).</text>
</comment>
<comment type="catalytic activity">
    <reaction evidence="2 4 5 6 7 8 9 11 12">
        <text>prostaglandin H2 = prostaglandin E2</text>
        <dbReference type="Rhea" id="RHEA:12893"/>
        <dbReference type="ChEBI" id="CHEBI:57405"/>
        <dbReference type="ChEBI" id="CHEBI:606564"/>
        <dbReference type="EC" id="5.3.99.3"/>
    </reaction>
    <physiologicalReaction direction="left-to-right" evidence="19 21 22 23">
        <dbReference type="Rhea" id="RHEA:12894"/>
    </physiologicalReaction>
</comment>
<comment type="catalytic activity">
    <reaction evidence="5">
        <text>2-glyceryl-prostaglandin H2 = 2-glyceryl-prostaglandin E2</text>
        <dbReference type="Rhea" id="RHEA:53324"/>
        <dbReference type="ChEBI" id="CHEBI:85166"/>
        <dbReference type="ChEBI" id="CHEBI:137172"/>
    </reaction>
    <physiologicalReaction direction="left-to-right" evidence="20">
        <dbReference type="Rhea" id="RHEA:53325"/>
    </physiologicalReaction>
</comment>
<comment type="catalytic activity">
    <reaction evidence="7">
        <text>prostaglandin G2 = (15S)-15-hydroperoxy-prostaglandin E2</text>
        <dbReference type="Rhea" id="RHEA:64364"/>
        <dbReference type="ChEBI" id="CHEBI:82629"/>
        <dbReference type="ChEBI" id="CHEBI:152564"/>
    </reaction>
    <physiologicalReaction direction="left-to-right" evidence="22">
        <dbReference type="Rhea" id="RHEA:64365"/>
    </physiologicalReaction>
</comment>
<comment type="catalytic activity">
    <reaction evidence="7 12">
        <text>1-chloro-2,4-dinitrobenzene + glutathione = 2,4-dinitrophenyl-S-glutathione + chloride + H(+)</text>
        <dbReference type="Rhea" id="RHEA:51220"/>
        <dbReference type="ChEBI" id="CHEBI:15378"/>
        <dbReference type="ChEBI" id="CHEBI:17996"/>
        <dbReference type="ChEBI" id="CHEBI:34718"/>
        <dbReference type="ChEBI" id="CHEBI:57925"/>
        <dbReference type="ChEBI" id="CHEBI:133977"/>
        <dbReference type="EC" id="2.5.1.18"/>
    </reaction>
    <physiologicalReaction direction="left-to-right" evidence="25">
        <dbReference type="Rhea" id="RHEA:51221"/>
    </physiologicalReaction>
</comment>
<comment type="catalytic activity">
    <reaction evidence="5">
        <text>(5S)-hydroperoxy-(6E,8Z,11Z,14Z)-eicosatetraenoate + 2 glutathione = (5S)-hydroxy-(6E,8Z,11Z,14Z)-eicosatetraenoate + glutathione disulfide + H2O</text>
        <dbReference type="Rhea" id="RHEA:48620"/>
        <dbReference type="ChEBI" id="CHEBI:15377"/>
        <dbReference type="ChEBI" id="CHEBI:57450"/>
        <dbReference type="ChEBI" id="CHEBI:57925"/>
        <dbReference type="ChEBI" id="CHEBI:58297"/>
        <dbReference type="ChEBI" id="CHEBI:90632"/>
    </reaction>
</comment>
<comment type="cofactor">
    <cofactor evidence="4 6 7 9 12">
        <name>glutathione</name>
        <dbReference type="ChEBI" id="CHEBI:57925"/>
    </cofactor>
</comment>
<comment type="activity regulation">
    <text evidence="3">Induced by interleukin IL1B.</text>
</comment>
<comment type="biophysicochemical properties">
    <kinetics>
        <KM evidence="6">75 uM for glutathione</KM>
        <KM evidence="7">160 uM for prostaglandin H2 (at 37 degrees)</KM>
        <KM evidence="7">71 uM for glutathione (at 37 degrees)</KM>
        <KM evidence="7">160 uM for prostaglandin G2 (at 37 degrees)</KM>
        <KM evidence="6">14 uM for prostaglandin H2</KM>
        <KM evidence="8">130 uM for prostaglandin H2</KM>
        <Vmax evidence="7">170.0 umol/min/mg enzyme with prostaglandin H2 as substrate</Vmax>
        <text evidence="7">kcat is 50 sec(-1) for prostaglandin H2 as substrate (PubMed:12672824). kcat is 75 sec(-1) for prostaglandin H2 as substrate (PubMed:12672824). kcat is 21 sec(-1) for glutathione as substrate (PubMed:12672824).</text>
    </kinetics>
</comment>
<comment type="pathway">
    <text evidence="4">Lipid metabolism; prostaglandin biosynthesis.</text>
</comment>
<comment type="subunit">
    <text evidence="7 10">Homotrimer.</text>
</comment>
<comment type="interaction">
    <interactant intactId="EBI-11161398">
        <id>O14684</id>
    </interactant>
    <interactant intactId="EBI-749204">
        <id>O15155</id>
        <label>BET1</label>
    </interactant>
    <organismsDiffer>false</organismsDiffer>
    <experiments>3</experiments>
</comment>
<comment type="interaction">
    <interactant intactId="EBI-11161398">
        <id>O14684</id>
    </interactant>
    <interactant intactId="EBI-12003442">
        <id>Q8WVX3-2</id>
        <label>C4orf3</label>
    </interactant>
    <organismsDiffer>false</organismsDiffer>
    <experiments>3</experiments>
</comment>
<comment type="interaction">
    <interactant intactId="EBI-11161398">
        <id>O14684</id>
    </interactant>
    <interactant intactId="EBI-2339219">
        <id>Q08426</id>
        <label>EHHADH</label>
    </interactant>
    <organismsDiffer>false</organismsDiffer>
    <experiments>3</experiments>
</comment>
<comment type="interaction">
    <interactant intactId="EBI-11161398">
        <id>O14684</id>
    </interactant>
    <interactant intactId="EBI-11991950">
        <id>Q8WWP7</id>
        <label>GIMAP1</label>
    </interactant>
    <organismsDiffer>false</organismsDiffer>
    <experiments>3</experiments>
</comment>
<comment type="interaction">
    <interactant intactId="EBI-11161398">
        <id>O14684</id>
    </interactant>
    <interactant intactId="EBI-6166686">
        <id>Q96F15</id>
        <label>GIMAP5</label>
    </interactant>
    <organismsDiffer>false</organismsDiffer>
    <experiments>3</experiments>
</comment>
<comment type="interaction">
    <interactant intactId="EBI-11161398">
        <id>O14684</id>
    </interactant>
    <interactant intactId="EBI-608347">
        <id>Q04941</id>
        <label>PLP2</label>
    </interactant>
    <organismsDiffer>false</organismsDiffer>
    <experiments>3</experiments>
</comment>
<comment type="interaction">
    <interactant intactId="EBI-11161398">
        <id>O14684</id>
    </interactant>
    <interactant intactId="EBI-8652744">
        <id>Q96IW7</id>
        <label>SEC22A</label>
    </interactant>
    <organismsDiffer>false</organismsDiffer>
    <experiments>3</experiments>
</comment>
<comment type="interaction">
    <interactant intactId="EBI-11161398">
        <id>O14684</id>
    </interactant>
    <interactant intactId="EBI-749270">
        <id>Q8N6R1</id>
        <label>SERP2</label>
    </interactant>
    <organismsDiffer>false</organismsDiffer>
    <experiments>3</experiments>
</comment>
<comment type="interaction">
    <interactant intactId="EBI-11161398">
        <id>O14684</id>
    </interactant>
    <interactant intactId="EBI-8640191">
        <id>Q9NRQ5</id>
        <label>SMCO4</label>
    </interactant>
    <organismsDiffer>false</organismsDiffer>
    <experiments>3</experiments>
</comment>
<comment type="interaction">
    <interactant intactId="EBI-11161398">
        <id>O14684</id>
    </interactant>
    <interactant intactId="EBI-741829">
        <id>Q96HH6</id>
        <label>TMEM19</label>
    </interactant>
    <organismsDiffer>false</organismsDiffer>
    <experiments>3</experiments>
</comment>
<comment type="interaction">
    <interactant intactId="EBI-11161398">
        <id>O14684</id>
    </interactant>
    <interactant intactId="EBI-347385">
        <id>Q9H0R3</id>
        <label>TMEM222</label>
    </interactant>
    <organismsDiffer>false</organismsDiffer>
    <experiments>3</experiments>
</comment>
<comment type="interaction">
    <interactant intactId="EBI-11161398">
        <id>O14684</id>
    </interactant>
    <interactant intactId="EBI-6656213">
        <id>Q6PI78</id>
        <label>TMEM65</label>
    </interactant>
    <organismsDiffer>false</organismsDiffer>
    <experiments>3</experiments>
</comment>
<comment type="interaction">
    <interactant intactId="EBI-11161398">
        <id>O14684</id>
    </interactant>
    <interactant intactId="EBI-722343">
        <id>Q15836</id>
        <label>VAMP3</label>
    </interactant>
    <organismsDiffer>false</organismsDiffer>
    <experiments>3</experiments>
</comment>
<comment type="interaction">
    <interactant intactId="EBI-11161398">
        <id>O14684</id>
    </interactant>
    <interactant intactId="EBI-744953">
        <id>O75379</id>
        <label>VAMP4</label>
    </interactant>
    <organismsDiffer>false</organismsDiffer>
    <experiments>3</experiments>
</comment>
<comment type="interaction">
    <interactant intactId="EBI-11161398">
        <id>O14684</id>
    </interactant>
    <interactant intactId="EBI-1188298">
        <id>O95292</id>
        <label>VAPB</label>
    </interactant>
    <organismsDiffer>false</organismsDiffer>
    <experiments>3</experiments>
</comment>
<comment type="interaction">
    <interactant intactId="EBI-11161398">
        <id>O14684</id>
    </interactant>
    <interactant intactId="EBI-2799703">
        <id>O95070</id>
        <label>YIF1A</label>
    </interactant>
    <organismsDiffer>false</organismsDiffer>
    <experiments>3</experiments>
</comment>
<comment type="subcellular location">
    <subcellularLocation>
        <location evidence="2 8 9 12">Membrane</location>
        <topology evidence="16">Multi-pass membrane protein</topology>
    </subcellularLocation>
    <subcellularLocation>
        <location evidence="4">Cytoplasm</location>
        <location evidence="4">Perinuclear region</location>
    </subcellularLocation>
    <text evidence="4">Colocalizes with PTGS1/COX-1 and PTGS2/COX-2 in the perinuclear compartment.</text>
</comment>
<comment type="induction">
    <text evidence="2 3 13">Induced by the interleukin IL1B (PubMed:10377395, PubMed:10760517). Induced By p53/TP53 (PubMed:9305847).</text>
</comment>
<comment type="similarity">
    <text evidence="18">Belongs to the MAPEG family.</text>
</comment>
<evidence type="ECO:0000250" key="1">
    <source>
        <dbReference type="UniProtKB" id="Q9JM51"/>
    </source>
</evidence>
<evidence type="ECO:0000269" key="2">
    <source>
    </source>
</evidence>
<evidence type="ECO:0000269" key="3">
    <source>
    </source>
</evidence>
<evidence type="ECO:0000269" key="4">
    <source>
    </source>
</evidence>
<evidence type="ECO:0000269" key="5">
    <source>
    </source>
</evidence>
<evidence type="ECO:0000269" key="6">
    <source>
    </source>
</evidence>
<evidence type="ECO:0000269" key="7">
    <source>
    </source>
</evidence>
<evidence type="ECO:0000269" key="8">
    <source>
    </source>
</evidence>
<evidence type="ECO:0000269" key="9">
    <source>
    </source>
</evidence>
<evidence type="ECO:0000269" key="10">
    <source>
    </source>
</evidence>
<evidence type="ECO:0000269" key="11">
    <source>
    </source>
</evidence>
<evidence type="ECO:0000269" key="12">
    <source>
    </source>
</evidence>
<evidence type="ECO:0000269" key="13">
    <source>
    </source>
</evidence>
<evidence type="ECO:0000303" key="14">
    <source>
    </source>
</evidence>
<evidence type="ECO:0000303" key="15">
    <source>
    </source>
</evidence>
<evidence type="ECO:0000303" key="16">
    <source>
    </source>
</evidence>
<evidence type="ECO:0000303" key="17">
    <source>
    </source>
</evidence>
<evidence type="ECO:0000305" key="18"/>
<evidence type="ECO:0000305" key="19">
    <source>
    </source>
</evidence>
<evidence type="ECO:0000305" key="20">
    <source>
    </source>
</evidence>
<evidence type="ECO:0000305" key="21">
    <source>
    </source>
</evidence>
<evidence type="ECO:0000305" key="22">
    <source>
    </source>
</evidence>
<evidence type="ECO:0000305" key="23">
    <source>
    </source>
</evidence>
<evidence type="ECO:0000305" key="24">
    <source>
    </source>
</evidence>
<evidence type="ECO:0000305" key="25">
    <source>
    </source>
</evidence>
<evidence type="ECO:0007744" key="26">
    <source>
        <dbReference type="PDB" id="4AL0"/>
    </source>
</evidence>
<evidence type="ECO:0007744" key="27">
    <source>
        <dbReference type="PDB" id="4BPM"/>
    </source>
</evidence>
<evidence type="ECO:0007744" key="28">
    <source>
        <dbReference type="PDB" id="4WAB"/>
    </source>
</evidence>
<evidence type="ECO:0007744" key="29">
    <source>
        <dbReference type="PDB" id="4YK5"/>
    </source>
</evidence>
<evidence type="ECO:0007744" key="30">
    <source>
        <dbReference type="PDB" id="4YL0"/>
    </source>
</evidence>
<evidence type="ECO:0007744" key="31">
    <source>
        <dbReference type="PDB" id="4YL1"/>
    </source>
</evidence>
<evidence type="ECO:0007744" key="32">
    <source>
        <dbReference type="PDB" id="4YL3"/>
    </source>
</evidence>
<evidence type="ECO:0007744" key="33">
    <source>
        <dbReference type="PDB" id="5BQG"/>
    </source>
</evidence>
<evidence type="ECO:0007744" key="34">
    <source>
        <dbReference type="PDB" id="5BQH"/>
    </source>
</evidence>
<evidence type="ECO:0007744" key="35">
    <source>
        <dbReference type="PDB" id="5BQI"/>
    </source>
</evidence>
<evidence type="ECO:0007744" key="36">
    <source>
        <dbReference type="PDB" id="5K0I"/>
    </source>
</evidence>
<evidence type="ECO:0007744" key="37">
    <source>
        <dbReference type="PDB" id="5T36"/>
    </source>
</evidence>
<evidence type="ECO:0007744" key="38">
    <source>
        <dbReference type="PDB" id="5T37"/>
    </source>
</evidence>
<evidence type="ECO:0007744" key="39">
    <source>
        <dbReference type="PDB" id="5TL9"/>
    </source>
</evidence>
<evidence type="ECO:0007829" key="40">
    <source>
        <dbReference type="PDB" id="4AL0"/>
    </source>
</evidence>
<evidence type="ECO:0007829" key="41">
    <source>
        <dbReference type="PDB" id="5TL9"/>
    </source>
</evidence>
<dbReference type="EC" id="5.3.99.3" evidence="2 4 5 7 8 9 12"/>
<dbReference type="EC" id="1.11.1.-" evidence="5"/>
<dbReference type="EC" id="2.5.1.18" evidence="7 12"/>
<dbReference type="EMBL" id="AF010316">
    <property type="protein sequence ID" value="AAC39534.1"/>
    <property type="molecule type" value="mRNA"/>
</dbReference>
<dbReference type="EMBL" id="AF027740">
    <property type="protein sequence ID" value="AAB82299.1"/>
    <property type="molecule type" value="mRNA"/>
</dbReference>
<dbReference type="EMBL" id="AJ271802">
    <property type="protein sequence ID" value="CAB72099.1"/>
    <property type="molecule type" value="Genomic_DNA"/>
</dbReference>
<dbReference type="EMBL" id="AJ271803">
    <property type="protein sequence ID" value="CAB72099.1"/>
    <property type="status" value="JOINED"/>
    <property type="molecule type" value="Genomic_DNA"/>
</dbReference>
<dbReference type="EMBL" id="AJ271804">
    <property type="protein sequence ID" value="CAB72099.1"/>
    <property type="status" value="JOINED"/>
    <property type="molecule type" value="Genomic_DNA"/>
</dbReference>
<dbReference type="EMBL" id="AK311947">
    <property type="protein sequence ID" value="BAG34888.1"/>
    <property type="molecule type" value="mRNA"/>
</dbReference>
<dbReference type="EMBL" id="EF543149">
    <property type="protein sequence ID" value="ABQ01233.1"/>
    <property type="molecule type" value="Genomic_DNA"/>
</dbReference>
<dbReference type="EMBL" id="AL590369">
    <property type="status" value="NOT_ANNOTATED_CDS"/>
    <property type="molecule type" value="Genomic_DNA"/>
</dbReference>
<dbReference type="EMBL" id="AL592219">
    <property type="status" value="NOT_ANNOTATED_CDS"/>
    <property type="molecule type" value="Genomic_DNA"/>
</dbReference>
<dbReference type="EMBL" id="BC008280">
    <property type="protein sequence ID" value="AAH08280.1"/>
    <property type="molecule type" value="mRNA"/>
</dbReference>
<dbReference type="CCDS" id="CCDS6927.1"/>
<dbReference type="RefSeq" id="NP_004869.1">
    <property type="nucleotide sequence ID" value="NM_004878.5"/>
</dbReference>
<dbReference type="PDB" id="3DWW">
    <property type="method" value="EM"/>
    <property type="resolution" value="3.50 A"/>
    <property type="chains" value="A/B/C=1-152"/>
</dbReference>
<dbReference type="PDB" id="4AL0">
    <property type="method" value="X-ray"/>
    <property type="resolution" value="1.16 A"/>
    <property type="chains" value="A=1-152"/>
</dbReference>
<dbReference type="PDB" id="4AL1">
    <property type="method" value="X-ray"/>
    <property type="resolution" value="1.95 A"/>
    <property type="chains" value="A=1-152"/>
</dbReference>
<dbReference type="PDB" id="4BPM">
    <property type="method" value="X-ray"/>
    <property type="resolution" value="2.08 A"/>
    <property type="chains" value="A=10-152"/>
</dbReference>
<dbReference type="PDB" id="4WAB">
    <property type="method" value="X-ray"/>
    <property type="resolution" value="2.70 A"/>
    <property type="chains" value="A=10-151"/>
</dbReference>
<dbReference type="PDB" id="4YK5">
    <property type="method" value="X-ray"/>
    <property type="resolution" value="1.42 A"/>
    <property type="chains" value="A=2-152"/>
</dbReference>
<dbReference type="PDB" id="4YL0">
    <property type="method" value="X-ray"/>
    <property type="resolution" value="1.52 A"/>
    <property type="chains" value="A=5-152"/>
</dbReference>
<dbReference type="PDB" id="4YL1">
    <property type="method" value="X-ray"/>
    <property type="resolution" value="1.41 A"/>
    <property type="chains" value="A=5-152"/>
</dbReference>
<dbReference type="PDB" id="4YL3">
    <property type="method" value="X-ray"/>
    <property type="resolution" value="1.41 A"/>
    <property type="chains" value="A=5-152"/>
</dbReference>
<dbReference type="PDB" id="5BQG">
    <property type="method" value="X-ray"/>
    <property type="resolution" value="1.44 A"/>
    <property type="chains" value="A=2-152"/>
</dbReference>
<dbReference type="PDB" id="5BQH">
    <property type="method" value="X-ray"/>
    <property type="resolution" value="1.60 A"/>
    <property type="chains" value="A=2-152"/>
</dbReference>
<dbReference type="PDB" id="5BQI">
    <property type="method" value="X-ray"/>
    <property type="resolution" value="1.88 A"/>
    <property type="chains" value="A=2-152"/>
</dbReference>
<dbReference type="PDB" id="5K0I">
    <property type="method" value="X-ray"/>
    <property type="resolution" value="1.30 A"/>
    <property type="chains" value="A=2-152"/>
</dbReference>
<dbReference type="PDB" id="5T36">
    <property type="method" value="X-ray"/>
    <property type="resolution" value="1.40 A"/>
    <property type="chains" value="A=2-152"/>
</dbReference>
<dbReference type="PDB" id="5T37">
    <property type="method" value="X-ray"/>
    <property type="resolution" value="1.76 A"/>
    <property type="chains" value="A=2-152"/>
</dbReference>
<dbReference type="PDB" id="5TL9">
    <property type="method" value="X-ray"/>
    <property type="resolution" value="1.20 A"/>
    <property type="chains" value="A=2-152"/>
</dbReference>
<dbReference type="PDB" id="6VL4">
    <property type="method" value="X-ray"/>
    <property type="resolution" value="1.40 A"/>
    <property type="chains" value="A=2-152"/>
</dbReference>
<dbReference type="PDB" id="8PYV">
    <property type="method" value="X-ray"/>
    <property type="resolution" value="1.77 A"/>
    <property type="chains" value="A=1-152"/>
</dbReference>
<dbReference type="PDBsum" id="3DWW"/>
<dbReference type="PDBsum" id="4AL0"/>
<dbReference type="PDBsum" id="4AL1"/>
<dbReference type="PDBsum" id="4BPM"/>
<dbReference type="PDBsum" id="4WAB"/>
<dbReference type="PDBsum" id="4YK5"/>
<dbReference type="PDBsum" id="4YL0"/>
<dbReference type="PDBsum" id="4YL1"/>
<dbReference type="PDBsum" id="4YL3"/>
<dbReference type="PDBsum" id="5BQG"/>
<dbReference type="PDBsum" id="5BQH"/>
<dbReference type="PDBsum" id="5BQI"/>
<dbReference type="PDBsum" id="5K0I"/>
<dbReference type="PDBsum" id="5T36"/>
<dbReference type="PDBsum" id="5T37"/>
<dbReference type="PDBsum" id="5TL9"/>
<dbReference type="PDBsum" id="6VL4"/>
<dbReference type="PDBsum" id="8PYV"/>
<dbReference type="SMR" id="O14684"/>
<dbReference type="BioGRID" id="114912">
    <property type="interactions" value="25"/>
</dbReference>
<dbReference type="FunCoup" id="O14684">
    <property type="interactions" value="254"/>
</dbReference>
<dbReference type="IntAct" id="O14684">
    <property type="interactions" value="20"/>
</dbReference>
<dbReference type="STRING" id="9606.ENSP00000342385"/>
<dbReference type="BindingDB" id="O14684"/>
<dbReference type="ChEMBL" id="CHEMBL5658"/>
<dbReference type="DrugBank" id="DB18405">
    <property type="generic name" value="Crisdesalazine"/>
</dbReference>
<dbReference type="DrugCentral" id="O14684"/>
<dbReference type="GuidetoPHARMACOLOGY" id="1377"/>
<dbReference type="SwissLipids" id="SLP:000001631"/>
<dbReference type="GlyGen" id="O14684">
    <property type="glycosylation" value="1 site, 1 O-linked glycan (1 site)"/>
</dbReference>
<dbReference type="iPTMnet" id="O14684"/>
<dbReference type="PhosphoSitePlus" id="O14684"/>
<dbReference type="SwissPalm" id="O14684"/>
<dbReference type="BioMuta" id="PTGES"/>
<dbReference type="jPOST" id="O14684"/>
<dbReference type="MassIVE" id="O14684"/>
<dbReference type="PaxDb" id="9606-ENSP00000342385"/>
<dbReference type="PeptideAtlas" id="O14684"/>
<dbReference type="ProteomicsDB" id="48167"/>
<dbReference type="Pumba" id="O14684"/>
<dbReference type="TopDownProteomics" id="O14684"/>
<dbReference type="Antibodypedia" id="17900">
    <property type="antibodies" value="219 antibodies from 33 providers"/>
</dbReference>
<dbReference type="DNASU" id="9536"/>
<dbReference type="Ensembl" id="ENST00000340607.5">
    <property type="protein sequence ID" value="ENSP00000342385.4"/>
    <property type="gene ID" value="ENSG00000148344.11"/>
</dbReference>
<dbReference type="GeneID" id="9536"/>
<dbReference type="KEGG" id="hsa:9536"/>
<dbReference type="MANE-Select" id="ENST00000340607.5">
    <property type="protein sequence ID" value="ENSP00000342385.4"/>
    <property type="RefSeq nucleotide sequence ID" value="NM_004878.5"/>
    <property type="RefSeq protein sequence ID" value="NP_004869.1"/>
</dbReference>
<dbReference type="UCSC" id="uc004byi.4">
    <property type="organism name" value="human"/>
</dbReference>
<dbReference type="AGR" id="HGNC:9599"/>
<dbReference type="CTD" id="9536"/>
<dbReference type="DisGeNET" id="9536"/>
<dbReference type="GeneCards" id="PTGES"/>
<dbReference type="HGNC" id="HGNC:9599">
    <property type="gene designation" value="PTGES"/>
</dbReference>
<dbReference type="HPA" id="ENSG00000148344">
    <property type="expression patterns" value="Tissue enhanced (seminal vesicle, urinary bladder)"/>
</dbReference>
<dbReference type="MIM" id="605172">
    <property type="type" value="gene"/>
</dbReference>
<dbReference type="neXtProt" id="NX_O14684"/>
<dbReference type="OpenTargets" id="ENSG00000148344"/>
<dbReference type="PharmGKB" id="PA33948"/>
<dbReference type="VEuPathDB" id="HostDB:ENSG00000148344"/>
<dbReference type="eggNOG" id="ENOG502RZBK">
    <property type="taxonomic scope" value="Eukaryota"/>
</dbReference>
<dbReference type="GeneTree" id="ENSGT00390000011980"/>
<dbReference type="HOGENOM" id="CLU_105467_1_1_1"/>
<dbReference type="InParanoid" id="O14684"/>
<dbReference type="OMA" id="TIAQIPC"/>
<dbReference type="OrthoDB" id="193139at2759"/>
<dbReference type="PAN-GO" id="O14684">
    <property type="GO annotations" value="3 GO annotations based on evolutionary models"/>
</dbReference>
<dbReference type="PhylomeDB" id="O14684"/>
<dbReference type="TreeFam" id="TF105327"/>
<dbReference type="BioCyc" id="MetaCyc:HS07518-MONOMER"/>
<dbReference type="BRENDA" id="5.3.99.3">
    <property type="organism ID" value="2681"/>
</dbReference>
<dbReference type="PathwayCommons" id="O14684"/>
<dbReference type="Reactome" id="R-HSA-2162123">
    <property type="pathway name" value="Synthesis of Prostaglandins (PG) and Thromboxanes (TX)"/>
</dbReference>
<dbReference type="SABIO-RK" id="O14684"/>
<dbReference type="SignaLink" id="O14684"/>
<dbReference type="SIGNOR" id="O14684"/>
<dbReference type="UniPathway" id="UPA00662"/>
<dbReference type="BioGRID-ORCS" id="9536">
    <property type="hits" value="9 hits in 1149 CRISPR screens"/>
</dbReference>
<dbReference type="ChiTaRS" id="PTGES">
    <property type="organism name" value="human"/>
</dbReference>
<dbReference type="EvolutionaryTrace" id="O14684"/>
<dbReference type="GeneWiki" id="PTGES"/>
<dbReference type="GenomeRNAi" id="9536"/>
<dbReference type="Pharos" id="O14684">
    <property type="development level" value="Tchem"/>
</dbReference>
<dbReference type="PRO" id="PR:O14684"/>
<dbReference type="Proteomes" id="UP000005640">
    <property type="component" value="Chromosome 9"/>
</dbReference>
<dbReference type="RNAct" id="O14684">
    <property type="molecule type" value="protein"/>
</dbReference>
<dbReference type="Bgee" id="ENSG00000148344">
    <property type="expression patterns" value="Expressed in palpebral conjunctiva and 159 other cell types or tissues"/>
</dbReference>
<dbReference type="GO" id="GO:0005789">
    <property type="term" value="C:endoplasmic reticulum membrane"/>
    <property type="evidence" value="ECO:0000304"/>
    <property type="project" value="Reactome"/>
</dbReference>
<dbReference type="GO" id="GO:0016020">
    <property type="term" value="C:membrane"/>
    <property type="evidence" value="ECO:0000314"/>
    <property type="project" value="UniProtKB"/>
</dbReference>
<dbReference type="GO" id="GO:0005641">
    <property type="term" value="C:nuclear envelope lumen"/>
    <property type="evidence" value="ECO:0007669"/>
    <property type="project" value="Ensembl"/>
</dbReference>
<dbReference type="GO" id="GO:0048471">
    <property type="term" value="C:perinuclear region of cytoplasm"/>
    <property type="evidence" value="ECO:0007669"/>
    <property type="project" value="UniProtKB-SubCell"/>
</dbReference>
<dbReference type="GO" id="GO:0043295">
    <property type="term" value="F:glutathione binding"/>
    <property type="evidence" value="ECO:0000314"/>
    <property type="project" value="UniProtKB"/>
</dbReference>
<dbReference type="GO" id="GO:0004602">
    <property type="term" value="F:glutathione peroxidase activity"/>
    <property type="evidence" value="ECO:0000314"/>
    <property type="project" value="UniProtKB"/>
</dbReference>
<dbReference type="GO" id="GO:0004364">
    <property type="term" value="F:glutathione transferase activity"/>
    <property type="evidence" value="ECO:0000314"/>
    <property type="project" value="UniProtKB"/>
</dbReference>
<dbReference type="GO" id="GO:0004667">
    <property type="term" value="F:prostaglandin-D synthase activity"/>
    <property type="evidence" value="ECO:0007669"/>
    <property type="project" value="Ensembl"/>
</dbReference>
<dbReference type="GO" id="GO:0050220">
    <property type="term" value="F:prostaglandin-E synthase activity"/>
    <property type="evidence" value="ECO:0000314"/>
    <property type="project" value="UniProtKB"/>
</dbReference>
<dbReference type="GO" id="GO:0008283">
    <property type="term" value="P:cell population proliferation"/>
    <property type="evidence" value="ECO:0007669"/>
    <property type="project" value="Ensembl"/>
</dbReference>
<dbReference type="GO" id="GO:0008285">
    <property type="term" value="P:negative regulation of cell population proliferation"/>
    <property type="evidence" value="ECO:0007669"/>
    <property type="project" value="Ensembl"/>
</dbReference>
<dbReference type="GO" id="GO:0032308">
    <property type="term" value="P:positive regulation of prostaglandin secretion"/>
    <property type="evidence" value="ECO:0007669"/>
    <property type="project" value="Ensembl"/>
</dbReference>
<dbReference type="GO" id="GO:0001516">
    <property type="term" value="P:prostaglandin biosynthetic process"/>
    <property type="evidence" value="ECO:0000314"/>
    <property type="project" value="UniProtKB"/>
</dbReference>
<dbReference type="GO" id="GO:0006693">
    <property type="term" value="P:prostaglandin metabolic process"/>
    <property type="evidence" value="ECO:0000304"/>
    <property type="project" value="ProtInc"/>
</dbReference>
<dbReference type="GO" id="GO:0031620">
    <property type="term" value="P:regulation of fever generation"/>
    <property type="evidence" value="ECO:0000250"/>
    <property type="project" value="UniProtKB"/>
</dbReference>
<dbReference type="GO" id="GO:0050727">
    <property type="term" value="P:regulation of inflammatory response"/>
    <property type="evidence" value="ECO:0000250"/>
    <property type="project" value="UniProtKB"/>
</dbReference>
<dbReference type="GO" id="GO:0019233">
    <property type="term" value="P:sensory perception of pain"/>
    <property type="evidence" value="ECO:0000250"/>
    <property type="project" value="UniProtKB"/>
</dbReference>
<dbReference type="GO" id="GO:0007165">
    <property type="term" value="P:signal transduction"/>
    <property type="evidence" value="ECO:0000303"/>
    <property type="project" value="ProtInc"/>
</dbReference>
<dbReference type="FunFam" id="1.20.120.550:FF:000002">
    <property type="entry name" value="Microsomal glutathione S-transferase 1"/>
    <property type="match status" value="1"/>
</dbReference>
<dbReference type="Gene3D" id="1.20.120.550">
    <property type="entry name" value="Membrane associated eicosanoid/glutathione metabolism-like domain"/>
    <property type="match status" value="1"/>
</dbReference>
<dbReference type="InterPro" id="IPR023352">
    <property type="entry name" value="MAPEG-like_dom_sf"/>
</dbReference>
<dbReference type="InterPro" id="IPR001129">
    <property type="entry name" value="Membr-assoc_MAPEG"/>
</dbReference>
<dbReference type="InterPro" id="IPR040162">
    <property type="entry name" value="MGST1-like"/>
</dbReference>
<dbReference type="PANTHER" id="PTHR10689">
    <property type="entry name" value="MICROSOMAL GLUTATHIONE S-TRANSFERASE 1"/>
    <property type="match status" value="1"/>
</dbReference>
<dbReference type="PANTHER" id="PTHR10689:SF9">
    <property type="entry name" value="PROSTAGLANDIN E SYNTHASE"/>
    <property type="match status" value="1"/>
</dbReference>
<dbReference type="Pfam" id="PF01124">
    <property type="entry name" value="MAPEG"/>
    <property type="match status" value="1"/>
</dbReference>
<dbReference type="SUPFAM" id="SSF161084">
    <property type="entry name" value="MAPEG domain-like"/>
    <property type="match status" value="1"/>
</dbReference>
<feature type="chain" id="PRO_0000217745" description="Prostaglandin E synthase">
    <location>
        <begin position="1"/>
        <end position="152"/>
    </location>
</feature>
<feature type="topological domain" description="Lumenal" evidence="24">
    <location>
        <begin position="1"/>
        <end position="12"/>
    </location>
</feature>
<feature type="transmembrane region" description="Helical" evidence="24">
    <location>
        <begin position="13"/>
        <end position="41"/>
    </location>
</feature>
<feature type="topological domain" description="Cytoplasmic" evidence="24">
    <location>
        <begin position="42"/>
        <end position="60"/>
    </location>
</feature>
<feature type="transmembrane region" description="Helical" evidence="24">
    <location>
        <begin position="61"/>
        <end position="90"/>
    </location>
</feature>
<feature type="topological domain" description="Lumenal" evidence="24">
    <location>
        <begin position="91"/>
        <end position="95"/>
    </location>
</feature>
<feature type="transmembrane region" description="Helical" evidence="24">
    <location>
        <begin position="96"/>
        <end position="119"/>
    </location>
</feature>
<feature type="topological domain" description="Cytoplasmic" evidence="24">
    <location>
        <begin position="120"/>
        <end position="123"/>
    </location>
</feature>
<feature type="transmembrane region" description="Helical" evidence="24">
    <location>
        <begin position="124"/>
        <end position="152"/>
    </location>
</feature>
<feature type="binding site" evidence="9 10 26 27 28 29 30 31 32 33 34 35 36 37 38 39">
    <location>
        <position position="38"/>
    </location>
    <ligand>
        <name>glutathione</name>
        <dbReference type="ChEBI" id="CHEBI:57925"/>
    </ligand>
</feature>
<feature type="binding site" evidence="9 10 26 27 28 29 30 31 32 33 34 35 36 37 38 39">
    <location>
        <begin position="73"/>
        <end position="77"/>
    </location>
    <ligand>
        <name>glutathione</name>
        <dbReference type="ChEBI" id="CHEBI:57925"/>
    </ligand>
</feature>
<feature type="binding site" evidence="9 10 26 27 28 29 30 31 32 33 34 35 36 37 38 39">
    <location>
        <position position="113"/>
    </location>
    <ligand>
        <name>glutathione</name>
        <dbReference type="ChEBI" id="CHEBI:57925"/>
    </ligand>
</feature>
<feature type="binding site" evidence="9 10 26 27 28 29 30 31 32 33 34 35 36 37 38 39">
    <location>
        <position position="117"/>
    </location>
    <ligand>
        <name>glutathione</name>
        <dbReference type="ChEBI" id="CHEBI:57925"/>
    </ligand>
</feature>
<feature type="binding site" evidence="9 10 26 27 28 29 30 31 32 33 34 35 36 37 38 39">
    <location>
        <begin position="126"/>
        <end position="130"/>
    </location>
    <ligand>
        <name>glutathione</name>
        <dbReference type="ChEBI" id="CHEBI:57925"/>
    </ligand>
</feature>
<feature type="site" description="Essential for protaglandin-E synthase activity" evidence="11 12">
    <location>
        <position position="49"/>
    </location>
</feature>
<feature type="site" description="Essential for protaglandin-E synthase activity" evidence="11 12">
    <location>
        <position position="126"/>
    </location>
</feature>
<feature type="mutagenesis site" description="Keeps about 40-50% of prostaglandin-E synthase activity." evidence="8">
    <original>Q</original>
    <variation>E</variation>
    <location>
        <position position="36"/>
    </location>
</feature>
<feature type="mutagenesis site" description="Loss of prostaglandin-E synthase activity." evidence="12">
    <original>D</original>
    <variation>A</variation>
    <location>
        <position position="49"/>
    </location>
</feature>
<feature type="mutagenesis site" description="Loss of prostaglandin-E synthase activity." evidence="11">
    <original>D</original>
    <variation>N</variation>
    <location>
        <position position="49"/>
    </location>
</feature>
<feature type="mutagenesis site" description="Reduces protaglandin-E synthase activity by 50%." evidence="9">
    <original>E</original>
    <variation>A</variation>
    <location>
        <position position="66"/>
    </location>
</feature>
<feature type="mutagenesis site" description="Loss of prostaglandin-E synthase activity." evidence="9">
    <original>R</original>
    <variation>A</variation>
    <location>
        <position position="67"/>
    </location>
</feature>
<feature type="mutagenesis site" description="Slightly reduced protaglandin-E synthase activity." evidence="9">
    <original>R</original>
    <variation>A</variation>
    <location>
        <position position="70"/>
    </location>
</feature>
<feature type="mutagenesis site" description="No effect on protaglandin-E synthase activity." evidence="4">
    <original>R</original>
    <variation>S</variation>
    <location>
        <position position="70"/>
    </location>
</feature>
<feature type="mutagenesis site" description="Reduces protaglandin-E synthase activity by 70%." evidence="9">
    <original>H</original>
    <variation>A</variation>
    <location>
        <position position="72"/>
    </location>
</feature>
<feature type="mutagenesis site" description="Retains partial of protaglandin-E synthase activity." evidence="12">
    <original>R</original>
    <variation>A</variation>
    <location>
        <position position="73"/>
    </location>
</feature>
<feature type="mutagenesis site" description="Loss of protaglandin-E synthase activity." evidence="12">
    <original>R</original>
    <variation>L</variation>
    <location>
        <position position="73"/>
    </location>
</feature>
<feature type="mutagenesis site" description="Loss of protaglandin-E synthase activity." evidence="4 9">
    <original>R</original>
    <variation>A</variation>
    <variation>S</variation>
    <location>
        <position position="110"/>
    </location>
</feature>
<feature type="mutagenesis site" description="Retains 17.8% of protaglandin-E synthase activity." evidence="8">
    <original>R</original>
    <variation>T</variation>
    <location>
        <position position="110"/>
    </location>
</feature>
<feature type="mutagenesis site" description="Retains 21.3% activity of protaglandin-E synthase activity." evidence="8">
    <original>T</original>
    <variation>V</variation>
    <location>
        <position position="114"/>
    </location>
</feature>
<feature type="mutagenesis site" description="Loss of protaglandin-E synthase activity." evidence="9">
    <original>Y</original>
    <variation>A</variation>
    <location>
        <position position="117"/>
    </location>
</feature>
<feature type="mutagenesis site" description="No effect on protaglandin-E synthase activity." evidence="4 9">
    <original>Y</original>
    <variation>F</variation>
    <location>
        <position position="117"/>
    </location>
</feature>
<feature type="mutagenesis site" description="Loss of prostaglandin-E synthase activity." evidence="12">
    <original>R</original>
    <variation>A</variation>
    <variation>L</variation>
    <location>
        <position position="126"/>
    </location>
</feature>
<feature type="mutagenesis site" description="Loss of prostaglandin-E synthase activity. Transforms prostaglandin-E synthase activity to prostaglandin-F(2alpha)synthase activity." evidence="11">
    <original>R</original>
    <variation>K</variation>
    <location>
        <position position="126"/>
    </location>
</feature>
<feature type="mutagenesis site" description="Loss of prostaglandin-E synthase activity." evidence="11">
    <original>R</original>
    <variation>Q</variation>
    <location>
        <position position="126"/>
    </location>
</feature>
<feature type="mutagenesis site" description="No effect on protaglandin-E synthase activity." evidence="11 12">
    <original>S</original>
    <variation>A</variation>
    <location>
        <position position="127"/>
    </location>
</feature>
<feature type="mutagenesis site" description="Loss of protaglandin-E synthase activity." evidence="8">
    <original>Y</original>
    <variation>I</variation>
    <location>
        <position position="130"/>
    </location>
</feature>
<feature type="mutagenesis site" description="Keeps about 40-50% of prostaglandin-E synthase activity." evidence="8">
    <original>Q</original>
    <variation>E</variation>
    <location>
        <position position="134"/>
    </location>
</feature>
<feature type="sequence conflict" description="In Ref. 1; AAC39534." evidence="18" ref="1">
    <original>G</original>
    <variation>GG</variation>
    <location>
        <position position="55"/>
    </location>
</feature>
<feature type="helix" evidence="41">
    <location>
        <begin position="6"/>
        <end position="9"/>
    </location>
</feature>
<feature type="helix" evidence="40">
    <location>
        <begin position="13"/>
        <end position="41"/>
    </location>
</feature>
<feature type="strand" evidence="40">
    <location>
        <begin position="44"/>
        <end position="46"/>
    </location>
</feature>
<feature type="helix" evidence="40">
    <location>
        <begin position="47"/>
        <end position="52"/>
    </location>
</feature>
<feature type="helix" evidence="40">
    <location>
        <begin position="56"/>
        <end position="58"/>
    </location>
</feature>
<feature type="helix" evidence="40">
    <location>
        <begin position="63"/>
        <end position="90"/>
    </location>
</feature>
<feature type="helix" evidence="40">
    <location>
        <begin position="96"/>
        <end position="118"/>
    </location>
</feature>
<feature type="helix" evidence="40">
    <location>
        <begin position="125"/>
        <end position="150"/>
    </location>
</feature>
<proteinExistence type="evidence at protein level"/>
<protein>
    <recommendedName>
        <fullName>Prostaglandin E synthase</fullName>
        <ecNumber evidence="2 4 5 7 8 9 12">5.3.99.3</ecNumber>
    </recommendedName>
    <alternativeName>
        <fullName>Glutathione peroxidase PTGES</fullName>
        <ecNumber evidence="5">1.11.1.-</ecNumber>
    </alternativeName>
    <alternativeName>
        <fullName>Glutathione transferase PTGES</fullName>
        <ecNumber evidence="7 12">2.5.1.18</ecNumber>
    </alternativeName>
    <alternativeName>
        <fullName evidence="14">Microsomal glutathione S-transferase 1-like 1</fullName>
        <shortName evidence="14">MGST1-L1</shortName>
    </alternativeName>
    <alternativeName>
        <fullName evidence="15">Microsomal prostaglandin E synthase 1</fullName>
        <shortName evidence="15">MPGES-1</shortName>
    </alternativeName>
    <alternativeName>
        <fullName evidence="17">p53-induced gene 12 protein</fullName>
    </alternativeName>
</protein>
<reference key="1">
    <citation type="journal article" date="1997" name="Nature">
        <title>A model for p53-induced apoptosis.</title>
        <authorList>
            <person name="Polyak K."/>
            <person name="Xia Y."/>
            <person name="Zweier J.L."/>
            <person name="Kinzler K.W."/>
            <person name="Vogelstein B."/>
        </authorList>
    </citation>
    <scope>NUCLEOTIDE SEQUENCE [MRNA]</scope>
    <scope>INDUCTION BY TP53</scope>
    <source>
        <tissue>Colon cancer</tissue>
    </source>
</reference>
<reference key="2">
    <citation type="journal article" date="1999" name="Proc. Natl. Acad. Sci. U.S.A.">
        <title>Identification of human prostaglandin E synthase: a microsomal, glutathione-dependent, inducible enzyme, constituting a potential novel drug target.</title>
        <authorList>
            <person name="Jakobsson P.-J."/>
            <person name="Thoren S."/>
            <person name="Morgenstern R."/>
            <person name="Samuelsson B."/>
        </authorList>
    </citation>
    <scope>NUCLEOTIDE SEQUENCE [MRNA]</scope>
    <scope>CATALYTIC ACTIVITY</scope>
    <scope>FUNCTION</scope>
    <scope>INDUCTION</scope>
    <scope>SUBCELLULAR LOCATION</scope>
</reference>
<reference key="3">
    <citation type="journal article" date="2000" name="FEBS Lett.">
        <title>Human glutathione dependent prostaglandin E synthase: gene structure and regulation.</title>
        <authorList>
            <person name="Forsberg L."/>
            <person name="Leeb L."/>
            <person name="Thoren S."/>
            <person name="Morgenstern R."/>
            <person name="Jakobsson P.J."/>
        </authorList>
    </citation>
    <scope>NUCLEOTIDE SEQUENCE [GENOMIC DNA]</scope>
    <scope>INDUCTION</scope>
    <scope>ACTIVITY REGULATION</scope>
</reference>
<reference key="4">
    <citation type="journal article" date="2004" name="Nat. Genet.">
        <title>Complete sequencing and characterization of 21,243 full-length human cDNAs.</title>
        <authorList>
            <person name="Ota T."/>
            <person name="Suzuki Y."/>
            <person name="Nishikawa T."/>
            <person name="Otsuki T."/>
            <person name="Sugiyama T."/>
            <person name="Irie R."/>
            <person name="Wakamatsu A."/>
            <person name="Hayashi K."/>
            <person name="Sato H."/>
            <person name="Nagai K."/>
            <person name="Kimura K."/>
            <person name="Makita H."/>
            <person name="Sekine M."/>
            <person name="Obayashi M."/>
            <person name="Nishi T."/>
            <person name="Shibahara T."/>
            <person name="Tanaka T."/>
            <person name="Ishii S."/>
            <person name="Yamamoto J."/>
            <person name="Saito K."/>
            <person name="Kawai Y."/>
            <person name="Isono Y."/>
            <person name="Nakamura Y."/>
            <person name="Nagahari K."/>
            <person name="Murakami K."/>
            <person name="Yasuda T."/>
            <person name="Iwayanagi T."/>
            <person name="Wagatsuma M."/>
            <person name="Shiratori A."/>
            <person name="Sudo H."/>
            <person name="Hosoiri T."/>
            <person name="Kaku Y."/>
            <person name="Kodaira H."/>
            <person name="Kondo H."/>
            <person name="Sugawara M."/>
            <person name="Takahashi M."/>
            <person name="Kanda K."/>
            <person name="Yokoi T."/>
            <person name="Furuya T."/>
            <person name="Kikkawa E."/>
            <person name="Omura Y."/>
            <person name="Abe K."/>
            <person name="Kamihara K."/>
            <person name="Katsuta N."/>
            <person name="Sato K."/>
            <person name="Tanikawa M."/>
            <person name="Yamazaki M."/>
            <person name="Ninomiya K."/>
            <person name="Ishibashi T."/>
            <person name="Yamashita H."/>
            <person name="Murakawa K."/>
            <person name="Fujimori K."/>
            <person name="Tanai H."/>
            <person name="Kimata M."/>
            <person name="Watanabe M."/>
            <person name="Hiraoka S."/>
            <person name="Chiba Y."/>
            <person name="Ishida S."/>
            <person name="Ono Y."/>
            <person name="Takiguchi S."/>
            <person name="Watanabe S."/>
            <person name="Yosida M."/>
            <person name="Hotuta T."/>
            <person name="Kusano J."/>
            <person name="Kanehori K."/>
            <person name="Takahashi-Fujii A."/>
            <person name="Hara H."/>
            <person name="Tanase T.-O."/>
            <person name="Nomura Y."/>
            <person name="Togiya S."/>
            <person name="Komai F."/>
            <person name="Hara R."/>
            <person name="Takeuchi K."/>
            <person name="Arita M."/>
            <person name="Imose N."/>
            <person name="Musashino K."/>
            <person name="Yuuki H."/>
            <person name="Oshima A."/>
            <person name="Sasaki N."/>
            <person name="Aotsuka S."/>
            <person name="Yoshikawa Y."/>
            <person name="Matsunawa H."/>
            <person name="Ichihara T."/>
            <person name="Shiohata N."/>
            <person name="Sano S."/>
            <person name="Moriya S."/>
            <person name="Momiyama H."/>
            <person name="Satoh N."/>
            <person name="Takami S."/>
            <person name="Terashima Y."/>
            <person name="Suzuki O."/>
            <person name="Nakagawa S."/>
            <person name="Senoh A."/>
            <person name="Mizoguchi H."/>
            <person name="Goto Y."/>
            <person name="Shimizu F."/>
            <person name="Wakebe H."/>
            <person name="Hishigaki H."/>
            <person name="Watanabe T."/>
            <person name="Sugiyama A."/>
            <person name="Takemoto M."/>
            <person name="Kawakami B."/>
            <person name="Yamazaki M."/>
            <person name="Watanabe K."/>
            <person name="Kumagai A."/>
            <person name="Itakura S."/>
            <person name="Fukuzumi Y."/>
            <person name="Fujimori Y."/>
            <person name="Komiyama M."/>
            <person name="Tashiro H."/>
            <person name="Tanigami A."/>
            <person name="Fujiwara T."/>
            <person name="Ono T."/>
            <person name="Yamada K."/>
            <person name="Fujii Y."/>
            <person name="Ozaki K."/>
            <person name="Hirao M."/>
            <person name="Ohmori Y."/>
            <person name="Kawabata A."/>
            <person name="Hikiji T."/>
            <person name="Kobatake N."/>
            <person name="Inagaki H."/>
            <person name="Ikema Y."/>
            <person name="Okamoto S."/>
            <person name="Okitani R."/>
            <person name="Kawakami T."/>
            <person name="Noguchi S."/>
            <person name="Itoh T."/>
            <person name="Shigeta K."/>
            <person name="Senba T."/>
            <person name="Matsumura K."/>
            <person name="Nakajima Y."/>
            <person name="Mizuno T."/>
            <person name="Morinaga M."/>
            <person name="Sasaki M."/>
            <person name="Togashi T."/>
            <person name="Oyama M."/>
            <person name="Hata H."/>
            <person name="Watanabe M."/>
            <person name="Komatsu T."/>
            <person name="Mizushima-Sugano J."/>
            <person name="Satoh T."/>
            <person name="Shirai Y."/>
            <person name="Takahashi Y."/>
            <person name="Nakagawa K."/>
            <person name="Okumura K."/>
            <person name="Nagase T."/>
            <person name="Nomura N."/>
            <person name="Kikuchi H."/>
            <person name="Masuho Y."/>
            <person name="Yamashita R."/>
            <person name="Nakai K."/>
            <person name="Yada T."/>
            <person name="Nakamura Y."/>
            <person name="Ohara O."/>
            <person name="Isogai T."/>
            <person name="Sugano S."/>
        </authorList>
    </citation>
    <scope>NUCLEOTIDE SEQUENCE [LARGE SCALE MRNA]</scope>
    <source>
        <tissue>Mammary gland</tissue>
    </source>
</reference>
<reference key="5">
    <citation type="submission" date="2007-04" db="EMBL/GenBank/DDBJ databases">
        <authorList>
            <consortium name="SeattleSNPs variation discovery resource"/>
        </authorList>
    </citation>
    <scope>NUCLEOTIDE SEQUENCE [GENOMIC DNA]</scope>
</reference>
<reference key="6">
    <citation type="journal article" date="2004" name="Nature">
        <title>DNA sequence and analysis of human chromosome 9.</title>
        <authorList>
            <person name="Humphray S.J."/>
            <person name="Oliver K."/>
            <person name="Hunt A.R."/>
            <person name="Plumb R.W."/>
            <person name="Loveland J.E."/>
            <person name="Howe K.L."/>
            <person name="Andrews T.D."/>
            <person name="Searle S."/>
            <person name="Hunt S.E."/>
            <person name="Scott C.E."/>
            <person name="Jones M.C."/>
            <person name="Ainscough R."/>
            <person name="Almeida J.P."/>
            <person name="Ambrose K.D."/>
            <person name="Ashwell R.I.S."/>
            <person name="Babbage A.K."/>
            <person name="Babbage S."/>
            <person name="Bagguley C.L."/>
            <person name="Bailey J."/>
            <person name="Banerjee R."/>
            <person name="Barker D.J."/>
            <person name="Barlow K.F."/>
            <person name="Bates K."/>
            <person name="Beasley H."/>
            <person name="Beasley O."/>
            <person name="Bird C.P."/>
            <person name="Bray-Allen S."/>
            <person name="Brown A.J."/>
            <person name="Brown J.Y."/>
            <person name="Burford D."/>
            <person name="Burrill W."/>
            <person name="Burton J."/>
            <person name="Carder C."/>
            <person name="Carter N.P."/>
            <person name="Chapman J.C."/>
            <person name="Chen Y."/>
            <person name="Clarke G."/>
            <person name="Clark S.Y."/>
            <person name="Clee C.M."/>
            <person name="Clegg S."/>
            <person name="Collier R.E."/>
            <person name="Corby N."/>
            <person name="Crosier M."/>
            <person name="Cummings A.T."/>
            <person name="Davies J."/>
            <person name="Dhami P."/>
            <person name="Dunn M."/>
            <person name="Dutta I."/>
            <person name="Dyer L.W."/>
            <person name="Earthrowl M.E."/>
            <person name="Faulkner L."/>
            <person name="Fleming C.J."/>
            <person name="Frankish A."/>
            <person name="Frankland J.A."/>
            <person name="French L."/>
            <person name="Fricker D.G."/>
            <person name="Garner P."/>
            <person name="Garnett J."/>
            <person name="Ghori J."/>
            <person name="Gilbert J.G.R."/>
            <person name="Glison C."/>
            <person name="Grafham D.V."/>
            <person name="Gribble S."/>
            <person name="Griffiths C."/>
            <person name="Griffiths-Jones S."/>
            <person name="Grocock R."/>
            <person name="Guy J."/>
            <person name="Hall R.E."/>
            <person name="Hammond S."/>
            <person name="Harley J.L."/>
            <person name="Harrison E.S.I."/>
            <person name="Hart E.A."/>
            <person name="Heath P.D."/>
            <person name="Henderson C.D."/>
            <person name="Hopkins B.L."/>
            <person name="Howard P.J."/>
            <person name="Howden P.J."/>
            <person name="Huckle E."/>
            <person name="Johnson C."/>
            <person name="Johnson D."/>
            <person name="Joy A.A."/>
            <person name="Kay M."/>
            <person name="Keenan S."/>
            <person name="Kershaw J.K."/>
            <person name="Kimberley A.M."/>
            <person name="King A."/>
            <person name="Knights A."/>
            <person name="Laird G.K."/>
            <person name="Langford C."/>
            <person name="Lawlor S."/>
            <person name="Leongamornlert D.A."/>
            <person name="Leversha M."/>
            <person name="Lloyd C."/>
            <person name="Lloyd D.M."/>
            <person name="Lovell J."/>
            <person name="Martin S."/>
            <person name="Mashreghi-Mohammadi M."/>
            <person name="Matthews L."/>
            <person name="McLaren S."/>
            <person name="McLay K.E."/>
            <person name="McMurray A."/>
            <person name="Milne S."/>
            <person name="Nickerson T."/>
            <person name="Nisbett J."/>
            <person name="Nordsiek G."/>
            <person name="Pearce A.V."/>
            <person name="Peck A.I."/>
            <person name="Porter K.M."/>
            <person name="Pandian R."/>
            <person name="Pelan S."/>
            <person name="Phillimore B."/>
            <person name="Povey S."/>
            <person name="Ramsey Y."/>
            <person name="Rand V."/>
            <person name="Scharfe M."/>
            <person name="Sehra H.K."/>
            <person name="Shownkeen R."/>
            <person name="Sims S.K."/>
            <person name="Skuce C.D."/>
            <person name="Smith M."/>
            <person name="Steward C.A."/>
            <person name="Swarbreck D."/>
            <person name="Sycamore N."/>
            <person name="Tester J."/>
            <person name="Thorpe A."/>
            <person name="Tracey A."/>
            <person name="Tromans A."/>
            <person name="Thomas D.W."/>
            <person name="Wall M."/>
            <person name="Wallis J.M."/>
            <person name="West A.P."/>
            <person name="Whitehead S.L."/>
            <person name="Willey D.L."/>
            <person name="Williams S.A."/>
            <person name="Wilming L."/>
            <person name="Wray P.W."/>
            <person name="Young L."/>
            <person name="Ashurst J.L."/>
            <person name="Coulson A."/>
            <person name="Blocker H."/>
            <person name="Durbin R.M."/>
            <person name="Sulston J.E."/>
            <person name="Hubbard T."/>
            <person name="Jackson M.J."/>
            <person name="Bentley D.R."/>
            <person name="Beck S."/>
            <person name="Rogers J."/>
            <person name="Dunham I."/>
        </authorList>
    </citation>
    <scope>NUCLEOTIDE SEQUENCE [LARGE SCALE GENOMIC DNA]</scope>
</reference>
<reference key="7">
    <citation type="journal article" date="2004" name="Genome Res.">
        <title>The status, quality, and expansion of the NIH full-length cDNA project: the Mammalian Gene Collection (MGC).</title>
        <authorList>
            <consortium name="The MGC Project Team"/>
        </authorList>
    </citation>
    <scope>NUCLEOTIDE SEQUENCE [LARGE SCALE MRNA]</scope>
    <source>
        <tissue>Pancreas</tissue>
    </source>
</reference>
<reference key="8">
    <citation type="journal article" date="2000" name="J. Biol. Chem.">
        <title>Regulation of prostaglandin E2 biosynthesis by inducible membrane-associated prostaglandin E2 synthase that acts in concert with cyclooxygenase-2.</title>
        <authorList>
            <person name="Murakami M."/>
            <person name="Naraba H."/>
            <person name="Tanioka T."/>
            <person name="Semmyo N."/>
            <person name="Nakatani Y."/>
            <person name="Kojima F."/>
            <person name="Ikeda T."/>
            <person name="Fueki M."/>
            <person name="Ueno A."/>
            <person name="Oh S."/>
            <person name="Kudo I."/>
        </authorList>
    </citation>
    <scope>MUTAGENESIS OF ARG-70; ARG-110 AND TYR-117</scope>
    <scope>CATALYTIC ACTIVITY</scope>
    <scope>FUNCTION</scope>
    <scope>SUBCELLULAR LOCATION</scope>
    <scope>COFACTOR</scope>
    <scope>PATHWAY</scope>
</reference>
<reference key="9">
    <citation type="journal article" date="2002" name="J. Biol. Chem.">
        <title>Metabolism of the endocannabinoids, 2-arachidonylglycerol and anandamide, into prostaglandin, thromboxane, and prostacyclin glycerol esters and ethanolamides.</title>
        <authorList>
            <person name="Kozak K.R."/>
            <person name="Crews B.C."/>
            <person name="Morrow J.D."/>
            <person name="Wang L.H."/>
            <person name="Ma Y.H."/>
            <person name="Weinander R."/>
            <person name="Jakobsson P.J."/>
            <person name="Marnett L.J."/>
        </authorList>
    </citation>
    <scope>CATALYTIC ACTIVITY</scope>
    <scope>FUNCTION</scope>
</reference>
<reference key="10">
    <citation type="journal article" date="2002" name="Protein Expr. Purif.">
        <title>Purification and characterization of recombinant microsomal prostaglandin E synthase-1.</title>
        <authorList>
            <person name="Ouellet M."/>
            <person name="Falgueyret J.-P."/>
            <person name="Ear P.H."/>
            <person name="Pen A."/>
            <person name="Mancini J.A."/>
            <person name="Riendeau D."/>
            <person name="Percival M.D."/>
        </authorList>
    </citation>
    <scope>CATALYTIC ACTIVITY</scope>
    <scope>BIOPHYSICOCHEMICAL PROPERTIES</scope>
    <scope>COFACTOR</scope>
    <scope>FUNCTION</scope>
</reference>
<reference key="11">
    <citation type="journal article" date="2006" name="Bioorg. Med. Chem.">
        <title>Structural and functional characterization of human microsomal prostaglandin E synthase-1 by computational modeling and site-directed mutagenesis.</title>
        <authorList>
            <person name="Huang X."/>
            <person name="Yan W."/>
            <person name="Gao D."/>
            <person name="Tong M."/>
            <person name="Tai H.H."/>
            <person name="Zhan C.G."/>
        </authorList>
    </citation>
    <scope>CATALYTIC ACTIVITY</scope>
    <scope>FUNCTION</scope>
    <scope>MUTAGENESIS OF GLN-36; ARG-110; THR-114; TYR-130 AND GLN-134</scope>
    <scope>SUBCELLULAR LOCATION</scope>
    <scope>BIOPHYSICOCHEMICAL PROPERTIES</scope>
</reference>
<reference key="12">
    <citation type="journal article" date="2011" name="BMC Syst. Biol.">
        <title>Initial characterization of the human central proteome.</title>
        <authorList>
            <person name="Burkard T.R."/>
            <person name="Planyavsky M."/>
            <person name="Kaupe I."/>
            <person name="Breitwieser F.P."/>
            <person name="Buerckstuemmer T."/>
            <person name="Bennett K.L."/>
            <person name="Superti-Furga G."/>
            <person name="Colinge J."/>
        </authorList>
    </citation>
    <scope>IDENTIFICATION BY MASS SPECTROMETRY [LARGE SCALE ANALYSIS]</scope>
</reference>
<reference key="13">
    <citation type="journal article" date="2003" name="J. Biol. Chem.">
        <title>Human microsomal prostaglandin E synthase-1: purification, functional characterization, and projection structure determination.</title>
        <authorList>
            <person name="Thoren S."/>
            <person name="Weinander R."/>
            <person name="Saha S."/>
            <person name="Jegerschold C."/>
            <person name="Pettersson P.L."/>
            <person name="Samuelsson B."/>
            <person name="Hebert H."/>
            <person name="Hamberg M."/>
            <person name="Morgenstern R."/>
            <person name="Jakobsson P.-J."/>
        </authorList>
    </citation>
    <scope>CATALYTIC ACTIVITY</scope>
    <scope>BIOPHYSICOCHEMICAL PROPERTIES</scope>
    <scope>SUBUNIT</scope>
    <scope>FUNCTION</scope>
    <scope>COFACTOR</scope>
</reference>
<reference key="14">
    <citation type="journal article" date="2016" name="PLoS ONE">
        <title>Arg126 and Asp49 Are Essential for the Catalytic Function of Microsomal Prostaglandin E2 Synthase 1 and Ser127 Is Not.</title>
        <authorList>
            <person name="Raouf J."/>
            <person name="Rafique N."/>
            <person name="Goodman M.C."/>
            <person name="Idborg H."/>
            <person name="Bergqvist F."/>
            <person name="Armstrong R.N."/>
            <person name="Jakobsson P.J."/>
            <person name="Morgenstern R."/>
            <person name="Spahiu L."/>
        </authorList>
    </citation>
    <scope>FUNCTION</scope>
    <scope>CATALYTIC ACTIVITY</scope>
    <scope>MUTAGENESIS OF ASP-49; ARG-73; ARG-126 AND SER-127</scope>
    <scope>COFACTOR</scope>
</reference>
<reference key="15">
    <citation type="journal article" date="2016" name="Proc. Natl. Acad. Sci. U.S.A.">
        <title>A dynamic Asp-Arg interaction is essential for catalysis in microsomal prostaglandin E2 synthase.</title>
        <authorList>
            <person name="Brock J.S."/>
            <person name="Hamberg M."/>
            <person name="Balagunaseelan N."/>
            <person name="Goodman M."/>
            <person name="Morgenstern R."/>
            <person name="Strandback E."/>
            <person name="Samuelsson B."/>
            <person name="Rinaldo-Matthis A."/>
            <person name="Haeggstroem J.Z."/>
        </authorList>
    </citation>
    <scope>CATALYTIC ACTIVITY</scope>
    <scope>FUNCTION</scope>
    <scope>MUTAGENESIS OF ASP-49; ARG-126 AND SER-127</scope>
    <scope>COFACTOR</scope>
</reference>
<reference key="16">
    <citation type="journal article" date="2008" name="Proc. Natl. Acad. Sci. U.S.A.">
        <title>Structural basis for induced formation of the inflammatory mediator prostaglandin E2.</title>
        <authorList>
            <person name="Jegerschold C."/>
            <person name="Pawelzik S.C."/>
            <person name="Purhonen P."/>
            <person name="Bhakat P."/>
            <person name="Gheorghe K.R."/>
            <person name="Gyobu N."/>
            <person name="Mitsuoka K."/>
            <person name="Morgenstern R."/>
            <person name="Jakobsson P.J."/>
            <person name="Hebert H."/>
        </authorList>
    </citation>
    <scope>STRUCTURE BY ELECTRON MICROSCOPY (3.5 ANGSTROMS) IN COMPLEX WITH GLUTATHIONE</scope>
    <scope>FUNCTION</scope>
    <scope>CATALYTIC ACTIVITY</scope>
    <scope>COFACTOR</scope>
    <scope>SUBCELLULAR LOCATION</scope>
    <scope>TRANSMEMBRANE TOPOLOGY</scope>
    <scope>MUTAGENESIS OF GLU-66; ARG-67; ARG-70; HIS-72; ARG-110 AND TYR-117</scope>
</reference>
<reference key="17">
    <citation type="journal article" date="2013" name="Proc. Natl. Acad. Sci. U.S.A.">
        <title>Crystal structure of microsomal prostaglandin E2 synthase provides insight into diversity in the MAPEG superfamily.</title>
        <authorList>
            <person name="Sjogren T."/>
            <person name="Nord J."/>
            <person name="Ek M."/>
            <person name="Johansson P."/>
            <person name="Liu G."/>
            <person name="Geschwindner S."/>
        </authorList>
    </citation>
    <scope>X-RAY CRYSTALLOGRAPHY (1.16 ANGSTROMS) IN COMPLEXES WITH GLUTATIONE</scope>
    <scope>SUBUNIT</scope>
    <scope>PROBABLE TOPOLOGY</scope>
</reference>
<keyword id="KW-0002">3D-structure</keyword>
<keyword id="KW-0963">Cytoplasm</keyword>
<keyword id="KW-0275">Fatty acid biosynthesis</keyword>
<keyword id="KW-0276">Fatty acid metabolism</keyword>
<keyword id="KW-0413">Isomerase</keyword>
<keyword id="KW-0444">Lipid biosynthesis</keyword>
<keyword id="KW-0443">Lipid metabolism</keyword>
<keyword id="KW-0472">Membrane</keyword>
<keyword id="KW-0560">Oxidoreductase</keyword>
<keyword id="KW-0643">Prostaglandin biosynthesis</keyword>
<keyword id="KW-0644">Prostaglandin metabolism</keyword>
<keyword id="KW-1267">Proteomics identification</keyword>
<keyword id="KW-1185">Reference proteome</keyword>
<keyword id="KW-0808">Transferase</keyword>
<keyword id="KW-0812">Transmembrane</keyword>
<keyword id="KW-1133">Transmembrane helix</keyword>